<keyword id="KW-0025">Alternative splicing</keyword>
<keyword id="KW-0067">ATP-binding</keyword>
<keyword id="KW-0963">Cytoplasm</keyword>
<keyword id="KW-0967">Endosome</keyword>
<keyword id="KW-0418">Kinase</keyword>
<keyword id="KW-0446">Lipid-binding</keyword>
<keyword id="KW-0472">Membrane</keyword>
<keyword id="KW-0547">Nucleotide-binding</keyword>
<keyword id="KW-0597">Phosphoprotein</keyword>
<keyword id="KW-1185">Reference proteome</keyword>
<keyword id="KW-0677">Repeat</keyword>
<keyword id="KW-0723">Serine/threonine-protein kinase</keyword>
<keyword id="KW-0808">Transferase</keyword>
<accession>Q8BLK9</accession>
<accession>Q3UDY3</accession>
<accession>Q6PDY4</accession>
<accession>Q8BMQ5</accession>
<accession>Q8BX49</accession>
<organism>
    <name type="scientific">Mus musculus</name>
    <name type="common">Mouse</name>
    <dbReference type="NCBI Taxonomy" id="10090"/>
    <lineage>
        <taxon>Eukaryota</taxon>
        <taxon>Metazoa</taxon>
        <taxon>Chordata</taxon>
        <taxon>Craniata</taxon>
        <taxon>Vertebrata</taxon>
        <taxon>Euteleostomi</taxon>
        <taxon>Mammalia</taxon>
        <taxon>Eutheria</taxon>
        <taxon>Euarchontoglires</taxon>
        <taxon>Glires</taxon>
        <taxon>Rodentia</taxon>
        <taxon>Myomorpha</taxon>
        <taxon>Muroidea</taxon>
        <taxon>Muridae</taxon>
        <taxon>Murinae</taxon>
        <taxon>Mus</taxon>
        <taxon>Mus</taxon>
    </lineage>
</organism>
<name>KS6C1_MOUSE</name>
<reference key="1">
    <citation type="journal article" date="2005" name="Science">
        <title>The transcriptional landscape of the mammalian genome.</title>
        <authorList>
            <person name="Carninci P."/>
            <person name="Kasukawa T."/>
            <person name="Katayama S."/>
            <person name="Gough J."/>
            <person name="Frith M.C."/>
            <person name="Maeda N."/>
            <person name="Oyama R."/>
            <person name="Ravasi T."/>
            <person name="Lenhard B."/>
            <person name="Wells C."/>
            <person name="Kodzius R."/>
            <person name="Shimokawa K."/>
            <person name="Bajic V.B."/>
            <person name="Brenner S.E."/>
            <person name="Batalov S."/>
            <person name="Forrest A.R."/>
            <person name="Zavolan M."/>
            <person name="Davis M.J."/>
            <person name="Wilming L.G."/>
            <person name="Aidinis V."/>
            <person name="Allen J.E."/>
            <person name="Ambesi-Impiombato A."/>
            <person name="Apweiler R."/>
            <person name="Aturaliya R.N."/>
            <person name="Bailey T.L."/>
            <person name="Bansal M."/>
            <person name="Baxter L."/>
            <person name="Beisel K.W."/>
            <person name="Bersano T."/>
            <person name="Bono H."/>
            <person name="Chalk A.M."/>
            <person name="Chiu K.P."/>
            <person name="Choudhary V."/>
            <person name="Christoffels A."/>
            <person name="Clutterbuck D.R."/>
            <person name="Crowe M.L."/>
            <person name="Dalla E."/>
            <person name="Dalrymple B.P."/>
            <person name="de Bono B."/>
            <person name="Della Gatta G."/>
            <person name="di Bernardo D."/>
            <person name="Down T."/>
            <person name="Engstrom P."/>
            <person name="Fagiolini M."/>
            <person name="Faulkner G."/>
            <person name="Fletcher C.F."/>
            <person name="Fukushima T."/>
            <person name="Furuno M."/>
            <person name="Futaki S."/>
            <person name="Gariboldi M."/>
            <person name="Georgii-Hemming P."/>
            <person name="Gingeras T.R."/>
            <person name="Gojobori T."/>
            <person name="Green R.E."/>
            <person name="Gustincich S."/>
            <person name="Harbers M."/>
            <person name="Hayashi Y."/>
            <person name="Hensch T.K."/>
            <person name="Hirokawa N."/>
            <person name="Hill D."/>
            <person name="Huminiecki L."/>
            <person name="Iacono M."/>
            <person name="Ikeo K."/>
            <person name="Iwama A."/>
            <person name="Ishikawa T."/>
            <person name="Jakt M."/>
            <person name="Kanapin A."/>
            <person name="Katoh M."/>
            <person name="Kawasawa Y."/>
            <person name="Kelso J."/>
            <person name="Kitamura H."/>
            <person name="Kitano H."/>
            <person name="Kollias G."/>
            <person name="Krishnan S.P."/>
            <person name="Kruger A."/>
            <person name="Kummerfeld S.K."/>
            <person name="Kurochkin I.V."/>
            <person name="Lareau L.F."/>
            <person name="Lazarevic D."/>
            <person name="Lipovich L."/>
            <person name="Liu J."/>
            <person name="Liuni S."/>
            <person name="McWilliam S."/>
            <person name="Madan Babu M."/>
            <person name="Madera M."/>
            <person name="Marchionni L."/>
            <person name="Matsuda H."/>
            <person name="Matsuzawa S."/>
            <person name="Miki H."/>
            <person name="Mignone F."/>
            <person name="Miyake S."/>
            <person name="Morris K."/>
            <person name="Mottagui-Tabar S."/>
            <person name="Mulder N."/>
            <person name="Nakano N."/>
            <person name="Nakauchi H."/>
            <person name="Ng P."/>
            <person name="Nilsson R."/>
            <person name="Nishiguchi S."/>
            <person name="Nishikawa S."/>
            <person name="Nori F."/>
            <person name="Ohara O."/>
            <person name="Okazaki Y."/>
            <person name="Orlando V."/>
            <person name="Pang K.C."/>
            <person name="Pavan W.J."/>
            <person name="Pavesi G."/>
            <person name="Pesole G."/>
            <person name="Petrovsky N."/>
            <person name="Piazza S."/>
            <person name="Reed J."/>
            <person name="Reid J.F."/>
            <person name="Ring B.Z."/>
            <person name="Ringwald M."/>
            <person name="Rost B."/>
            <person name="Ruan Y."/>
            <person name="Salzberg S.L."/>
            <person name="Sandelin A."/>
            <person name="Schneider C."/>
            <person name="Schoenbach C."/>
            <person name="Sekiguchi K."/>
            <person name="Semple C.A."/>
            <person name="Seno S."/>
            <person name="Sessa L."/>
            <person name="Sheng Y."/>
            <person name="Shibata Y."/>
            <person name="Shimada H."/>
            <person name="Shimada K."/>
            <person name="Silva D."/>
            <person name="Sinclair B."/>
            <person name="Sperling S."/>
            <person name="Stupka E."/>
            <person name="Sugiura K."/>
            <person name="Sultana R."/>
            <person name="Takenaka Y."/>
            <person name="Taki K."/>
            <person name="Tammoja K."/>
            <person name="Tan S.L."/>
            <person name="Tang S."/>
            <person name="Taylor M.S."/>
            <person name="Tegner J."/>
            <person name="Teichmann S.A."/>
            <person name="Ueda H.R."/>
            <person name="van Nimwegen E."/>
            <person name="Verardo R."/>
            <person name="Wei C.L."/>
            <person name="Yagi K."/>
            <person name="Yamanishi H."/>
            <person name="Zabarovsky E."/>
            <person name="Zhu S."/>
            <person name="Zimmer A."/>
            <person name="Hide W."/>
            <person name="Bult C."/>
            <person name="Grimmond S.M."/>
            <person name="Teasdale R.D."/>
            <person name="Liu E.T."/>
            <person name="Brusic V."/>
            <person name="Quackenbush J."/>
            <person name="Wahlestedt C."/>
            <person name="Mattick J.S."/>
            <person name="Hume D.A."/>
            <person name="Kai C."/>
            <person name="Sasaki D."/>
            <person name="Tomaru Y."/>
            <person name="Fukuda S."/>
            <person name="Kanamori-Katayama M."/>
            <person name="Suzuki M."/>
            <person name="Aoki J."/>
            <person name="Arakawa T."/>
            <person name="Iida J."/>
            <person name="Imamura K."/>
            <person name="Itoh M."/>
            <person name="Kato T."/>
            <person name="Kawaji H."/>
            <person name="Kawagashira N."/>
            <person name="Kawashima T."/>
            <person name="Kojima M."/>
            <person name="Kondo S."/>
            <person name="Konno H."/>
            <person name="Nakano K."/>
            <person name="Ninomiya N."/>
            <person name="Nishio T."/>
            <person name="Okada M."/>
            <person name="Plessy C."/>
            <person name="Shibata K."/>
            <person name="Shiraki T."/>
            <person name="Suzuki S."/>
            <person name="Tagami M."/>
            <person name="Waki K."/>
            <person name="Watahiki A."/>
            <person name="Okamura-Oho Y."/>
            <person name="Suzuki H."/>
            <person name="Kawai J."/>
            <person name="Hayashizaki Y."/>
        </authorList>
    </citation>
    <scope>NUCLEOTIDE SEQUENCE [LARGE SCALE MRNA] (ISOFORMS 1; 2 AND 4)</scope>
    <scope>NUCLEOTIDE SEQUENCE [LARGE SCALE MRNA] OF 284-1056 (ISOFORM 3)</scope>
    <source>
        <strain>C57BL/6J</strain>
        <tissue>Bone marrow</tissue>
        <tissue>Cerebellum</tissue>
        <tissue>Ovary</tissue>
        <tissue>Uterus</tissue>
    </source>
</reference>
<reference key="2">
    <citation type="journal article" date="2004" name="Genome Res.">
        <title>The status, quality, and expansion of the NIH full-length cDNA project: the Mammalian Gene Collection (MGC).</title>
        <authorList>
            <consortium name="The MGC Project Team"/>
        </authorList>
    </citation>
    <scope>NUCLEOTIDE SEQUENCE [LARGE SCALE MRNA] OF 436-1056 (ISOFORM 1)</scope>
    <source>
        <strain>C57BL/6J</strain>
        <tissue>Brain</tissue>
        <tissue>Cerebellum</tissue>
    </source>
</reference>
<reference key="3">
    <citation type="journal article" date="2007" name="Proc. Natl. Acad. Sci. U.S.A.">
        <title>Large-scale phosphorylation analysis of mouse liver.</title>
        <authorList>
            <person name="Villen J."/>
            <person name="Beausoleil S.A."/>
            <person name="Gerber S.A."/>
            <person name="Gygi S.P."/>
        </authorList>
    </citation>
    <scope>PHOSPHORYLATION [LARGE SCALE ANALYSIS] AT SER-423; SER-426 AND SER-599</scope>
    <scope>IDENTIFICATION BY MASS SPECTROMETRY [LARGE SCALE ANALYSIS]</scope>
    <source>
        <tissue>Liver</tissue>
    </source>
</reference>
<reference key="4">
    <citation type="journal article" date="2009" name="Immunity">
        <title>The phagosomal proteome in interferon-gamma-activated macrophages.</title>
        <authorList>
            <person name="Trost M."/>
            <person name="English L."/>
            <person name="Lemieux S."/>
            <person name="Courcelles M."/>
            <person name="Desjardins M."/>
            <person name="Thibault P."/>
        </authorList>
    </citation>
    <scope>IDENTIFICATION BY MASS SPECTROMETRY [LARGE SCALE ANALYSIS]</scope>
</reference>
<reference key="5">
    <citation type="journal article" date="2010" name="Cell">
        <title>A tissue-specific atlas of mouse protein phosphorylation and expression.</title>
        <authorList>
            <person name="Huttlin E.L."/>
            <person name="Jedrychowski M.P."/>
            <person name="Elias J.E."/>
            <person name="Goswami T."/>
            <person name="Rad R."/>
            <person name="Beausoleil S.A."/>
            <person name="Villen J."/>
            <person name="Haas W."/>
            <person name="Sowa M.E."/>
            <person name="Gygi S.P."/>
        </authorList>
    </citation>
    <scope>PHOSPHORYLATION [LARGE SCALE ANALYSIS] AT SER-423; SER-426; SER-446; SER-448; SER-493; SER-599; SER-602; SER-634; SER-661 AND SER-787</scope>
    <scope>IDENTIFICATION BY MASS SPECTROMETRY [LARGE SCALE ANALYSIS]</scope>
    <source>
        <tissue>Brain</tissue>
        <tissue>Brown adipose tissue</tissue>
        <tissue>Heart</tissue>
        <tissue>Kidney</tissue>
        <tissue>Lung</tissue>
        <tissue>Pancreas</tissue>
        <tissue>Spleen</tissue>
        <tissue>Testis</tissue>
    </source>
</reference>
<gene>
    <name type="primary">Rps6kc1</name>
</gene>
<comment type="function">
    <text evidence="1">May be involved in transmitting sphingosine-1 phosphate (SPP)-mediated signaling into the cell. Plays a role in the recruitment of PRDX3 to early endosomes.</text>
</comment>
<comment type="catalytic activity">
    <reaction>
        <text>L-seryl-[protein] + ATP = O-phospho-L-seryl-[protein] + ADP + H(+)</text>
        <dbReference type="Rhea" id="RHEA:17989"/>
        <dbReference type="Rhea" id="RHEA-COMP:9863"/>
        <dbReference type="Rhea" id="RHEA-COMP:11604"/>
        <dbReference type="ChEBI" id="CHEBI:15378"/>
        <dbReference type="ChEBI" id="CHEBI:29999"/>
        <dbReference type="ChEBI" id="CHEBI:30616"/>
        <dbReference type="ChEBI" id="CHEBI:83421"/>
        <dbReference type="ChEBI" id="CHEBI:456216"/>
        <dbReference type="EC" id="2.7.11.1"/>
    </reaction>
</comment>
<comment type="catalytic activity">
    <reaction>
        <text>L-threonyl-[protein] + ATP = O-phospho-L-threonyl-[protein] + ADP + H(+)</text>
        <dbReference type="Rhea" id="RHEA:46608"/>
        <dbReference type="Rhea" id="RHEA-COMP:11060"/>
        <dbReference type="Rhea" id="RHEA-COMP:11605"/>
        <dbReference type="ChEBI" id="CHEBI:15378"/>
        <dbReference type="ChEBI" id="CHEBI:30013"/>
        <dbReference type="ChEBI" id="CHEBI:30616"/>
        <dbReference type="ChEBI" id="CHEBI:61977"/>
        <dbReference type="ChEBI" id="CHEBI:456216"/>
        <dbReference type="EC" id="2.7.11.1"/>
    </reaction>
</comment>
<comment type="subunit">
    <text evidence="1">Interacts with SPHK1 and phosphatidylinositol 3-phosphate. Interacts (via PX domain) with PRDX3.</text>
</comment>
<comment type="subcellular location">
    <subcellularLocation>
        <location evidence="1">Cytoplasm</location>
    </subcellularLocation>
    <subcellularLocation>
        <location evidence="1">Membrane</location>
    </subcellularLocation>
    <subcellularLocation>
        <location evidence="1">Early endosome</location>
    </subcellularLocation>
</comment>
<comment type="alternative products">
    <event type="alternative splicing"/>
    <isoform>
        <id>Q8BLK9-1</id>
        <name>1</name>
        <sequence type="displayed"/>
    </isoform>
    <isoform>
        <id>Q8BLK9-2</id>
        <name>2</name>
        <sequence type="described" ref="VSP_018043 VSP_018044 VSP_018050 VSP_018051"/>
    </isoform>
    <isoform>
        <id>Q8BLK9-3</id>
        <name>3</name>
        <sequence type="described" ref="VSP_018046 VSP_018048 VSP_018049"/>
    </isoform>
    <isoform>
        <id>Q8BLK9-4</id>
        <name>4</name>
        <sequence type="described" ref="VSP_018045 VSP_018047"/>
    </isoform>
</comment>
<comment type="domain">
    <text evidence="1">The PX domain is essential for its localization to the early endosomes.</text>
</comment>
<comment type="domain">
    <text>The first protein kinase domain appears to be a pseudokinase domain as it does not contain the classical characteristics, such as the ATP-binding motif, ATP-binding site and active site.</text>
</comment>
<comment type="miscellaneous">
    <molecule>Isoform 2</molecule>
    <text evidence="6">Due to a partial intron retention.</text>
</comment>
<comment type="miscellaneous">
    <molecule>Isoform 3</molecule>
    <text evidence="6">Due to a partial intron retention.</text>
</comment>
<comment type="miscellaneous">
    <molecule>Isoform 4</molecule>
    <text evidence="6">May be produced at very low levels due to a premature stop codon in the mRNA, leading to nonsense-mediated mRNA decay.</text>
</comment>
<comment type="similarity">
    <text evidence="3">Belongs to the protein kinase superfamily. Ser/Thr protein kinase family. S6 kinase subfamily.</text>
</comment>
<comment type="sequence caution" evidence="6">
    <conflict type="erroneous initiation">
        <sequence resource="EMBL-CDS" id="BAC33510"/>
    </conflict>
    <text>Truncated N-terminus.</text>
</comment>
<evidence type="ECO:0000250" key="1">
    <source>
        <dbReference type="UniProtKB" id="Q96S38"/>
    </source>
</evidence>
<evidence type="ECO:0000255" key="2">
    <source>
        <dbReference type="PROSITE-ProRule" id="PRU00147"/>
    </source>
</evidence>
<evidence type="ECO:0000255" key="3">
    <source>
        <dbReference type="PROSITE-ProRule" id="PRU00159"/>
    </source>
</evidence>
<evidence type="ECO:0000256" key="4">
    <source>
        <dbReference type="SAM" id="MobiDB-lite"/>
    </source>
</evidence>
<evidence type="ECO:0000303" key="5">
    <source>
    </source>
</evidence>
<evidence type="ECO:0000305" key="6"/>
<evidence type="ECO:0007744" key="7">
    <source>
    </source>
</evidence>
<evidence type="ECO:0007744" key="8">
    <source>
    </source>
</evidence>
<dbReference type="EC" id="2.7.11.1"/>
<dbReference type="EMBL" id="AK030313">
    <property type="protein sequence ID" value="BAC26894.1"/>
    <property type="molecule type" value="mRNA"/>
</dbReference>
<dbReference type="EMBL" id="AK044809">
    <property type="protein sequence ID" value="BAC32101.1"/>
    <property type="molecule type" value="mRNA"/>
</dbReference>
<dbReference type="EMBL" id="AK049003">
    <property type="protein sequence ID" value="BAC33510.1"/>
    <property type="status" value="ALT_INIT"/>
    <property type="molecule type" value="mRNA"/>
</dbReference>
<dbReference type="EMBL" id="AK149858">
    <property type="protein sequence ID" value="BAE29128.1"/>
    <property type="molecule type" value="mRNA"/>
</dbReference>
<dbReference type="EMBL" id="BC058403">
    <property type="protein sequence ID" value="AAH58403.1"/>
    <property type="molecule type" value="mRNA"/>
</dbReference>
<dbReference type="RefSeq" id="NP_848890.3">
    <property type="nucleotide sequence ID" value="NM_178775.4"/>
</dbReference>
<dbReference type="SMR" id="Q8BLK9"/>
<dbReference type="BioGRID" id="235773">
    <property type="interactions" value="2"/>
</dbReference>
<dbReference type="FunCoup" id="Q8BLK9">
    <property type="interactions" value="2375"/>
</dbReference>
<dbReference type="IntAct" id="Q8BLK9">
    <property type="interactions" value="1"/>
</dbReference>
<dbReference type="MINT" id="Q8BLK9"/>
<dbReference type="STRING" id="10090.ENSMUSP00000061769"/>
<dbReference type="iPTMnet" id="Q8BLK9"/>
<dbReference type="PhosphoSitePlus" id="Q8BLK9"/>
<dbReference type="SwissPalm" id="Q8BLK9"/>
<dbReference type="jPOST" id="Q8BLK9"/>
<dbReference type="PaxDb" id="10090-ENSMUSP00000061769"/>
<dbReference type="PeptideAtlas" id="Q8BLK9"/>
<dbReference type="ProteomicsDB" id="263471">
    <molecule id="Q8BLK9-1"/>
</dbReference>
<dbReference type="ProteomicsDB" id="263472">
    <molecule id="Q8BLK9-2"/>
</dbReference>
<dbReference type="ProteomicsDB" id="263473">
    <molecule id="Q8BLK9-3"/>
</dbReference>
<dbReference type="ProteomicsDB" id="263474">
    <molecule id="Q8BLK9-4"/>
</dbReference>
<dbReference type="Pumba" id="Q8BLK9"/>
<dbReference type="Antibodypedia" id="34615">
    <property type="antibodies" value="162 antibodies from 27 providers"/>
</dbReference>
<dbReference type="DNASU" id="320119"/>
<dbReference type="Ensembl" id="ENSMUST00000159624.8">
    <molecule id="Q8BLK9-4"/>
    <property type="protein sequence ID" value="ENSMUSP00000125010.2"/>
    <property type="gene ID" value="ENSMUSG00000089872.11"/>
</dbReference>
<dbReference type="GeneID" id="320119"/>
<dbReference type="KEGG" id="mmu:320119"/>
<dbReference type="UCSC" id="uc007ebg.1">
    <molecule id="Q8BLK9-3"/>
    <property type="organism name" value="mouse"/>
</dbReference>
<dbReference type="UCSC" id="uc007ebh.2">
    <molecule id="Q8BLK9-2"/>
    <property type="organism name" value="mouse"/>
</dbReference>
<dbReference type="AGR" id="MGI:2443419"/>
<dbReference type="CTD" id="26750"/>
<dbReference type="MGI" id="MGI:2443419">
    <property type="gene designation" value="Rps6kc1"/>
</dbReference>
<dbReference type="VEuPathDB" id="HostDB:ENSMUSG00000089872"/>
<dbReference type="eggNOG" id="KOG0603">
    <property type="taxonomic scope" value="Eukaryota"/>
</dbReference>
<dbReference type="eggNOG" id="KOG2101">
    <property type="taxonomic scope" value="Eukaryota"/>
</dbReference>
<dbReference type="GeneTree" id="ENSGT00940000155656"/>
<dbReference type="HOGENOM" id="CLU_055745_0_0_1"/>
<dbReference type="InParanoid" id="Q8BLK9"/>
<dbReference type="OrthoDB" id="1278353at2759"/>
<dbReference type="PhylomeDB" id="Q8BLK9"/>
<dbReference type="BioGRID-ORCS" id="320119">
    <property type="hits" value="2 hits in 72 CRISPR screens"/>
</dbReference>
<dbReference type="ChiTaRS" id="Rps6kc1">
    <property type="organism name" value="mouse"/>
</dbReference>
<dbReference type="PRO" id="PR:Q8BLK9"/>
<dbReference type="Proteomes" id="UP000000589">
    <property type="component" value="Chromosome 1"/>
</dbReference>
<dbReference type="RNAct" id="Q8BLK9">
    <property type="molecule type" value="protein"/>
</dbReference>
<dbReference type="Bgee" id="ENSMUSG00000089872">
    <property type="expression patterns" value="Expressed in dentate gyrus of hippocampal formation granule cell and 239 other cell types or tissues"/>
</dbReference>
<dbReference type="ExpressionAtlas" id="Q8BLK9">
    <property type="expression patterns" value="baseline and differential"/>
</dbReference>
<dbReference type="GO" id="GO:0005769">
    <property type="term" value="C:early endosome"/>
    <property type="evidence" value="ECO:0007669"/>
    <property type="project" value="UniProtKB-SubCell"/>
</dbReference>
<dbReference type="GO" id="GO:0016020">
    <property type="term" value="C:membrane"/>
    <property type="evidence" value="ECO:0007669"/>
    <property type="project" value="UniProtKB-SubCell"/>
</dbReference>
<dbReference type="GO" id="GO:0014069">
    <property type="term" value="C:postsynaptic density"/>
    <property type="evidence" value="ECO:0000314"/>
    <property type="project" value="SynGO"/>
</dbReference>
<dbReference type="GO" id="GO:0005524">
    <property type="term" value="F:ATP binding"/>
    <property type="evidence" value="ECO:0007669"/>
    <property type="project" value="UniProtKB-KW"/>
</dbReference>
<dbReference type="GO" id="GO:0035091">
    <property type="term" value="F:phosphatidylinositol binding"/>
    <property type="evidence" value="ECO:0007669"/>
    <property type="project" value="InterPro"/>
</dbReference>
<dbReference type="GO" id="GO:0106310">
    <property type="term" value="F:protein serine kinase activity"/>
    <property type="evidence" value="ECO:0007669"/>
    <property type="project" value="RHEA"/>
</dbReference>
<dbReference type="GO" id="GO:0004674">
    <property type="term" value="F:protein serine/threonine kinase activity"/>
    <property type="evidence" value="ECO:0007669"/>
    <property type="project" value="UniProtKB-KW"/>
</dbReference>
<dbReference type="CDD" id="cd02677">
    <property type="entry name" value="MIT_SNX15"/>
    <property type="match status" value="1"/>
</dbReference>
<dbReference type="CDD" id="cd07287">
    <property type="entry name" value="PX_RPK118_like"/>
    <property type="match status" value="1"/>
</dbReference>
<dbReference type="CDD" id="cd05576">
    <property type="entry name" value="STKc_RPK118_like"/>
    <property type="match status" value="1"/>
</dbReference>
<dbReference type="FunFam" id="1.10.510.10:FF:000221">
    <property type="entry name" value="ribosomal protein S6 kinase delta-1 isoform X1"/>
    <property type="match status" value="1"/>
</dbReference>
<dbReference type="FunFam" id="1.20.58.80:FF:000005">
    <property type="entry name" value="ribosomal protein S6 kinase delta-1 isoform X1"/>
    <property type="match status" value="1"/>
</dbReference>
<dbReference type="FunFam" id="3.30.1520.10:FF:000017">
    <property type="entry name" value="ribosomal protein S6 kinase delta-1 isoform X1"/>
    <property type="match status" value="1"/>
</dbReference>
<dbReference type="Gene3D" id="1.20.58.80">
    <property type="entry name" value="Phosphotransferase system, lactose/cellobiose-type IIA subunit"/>
    <property type="match status" value="1"/>
</dbReference>
<dbReference type="Gene3D" id="3.30.1520.10">
    <property type="entry name" value="Phox-like domain"/>
    <property type="match status" value="1"/>
</dbReference>
<dbReference type="Gene3D" id="1.10.510.10">
    <property type="entry name" value="Transferase(Phosphotransferase) domain 1"/>
    <property type="match status" value="1"/>
</dbReference>
<dbReference type="InterPro" id="IPR051866">
    <property type="entry name" value="Intracell_Sig-Traffick_Protein"/>
</dbReference>
<dbReference type="InterPro" id="IPR011009">
    <property type="entry name" value="Kinase-like_dom_sf"/>
</dbReference>
<dbReference type="InterPro" id="IPR007330">
    <property type="entry name" value="MIT_dom"/>
</dbReference>
<dbReference type="InterPro" id="IPR036181">
    <property type="entry name" value="MIT_dom_sf"/>
</dbReference>
<dbReference type="InterPro" id="IPR000719">
    <property type="entry name" value="Prot_kinase_dom"/>
</dbReference>
<dbReference type="InterPro" id="IPR001683">
    <property type="entry name" value="PX_dom"/>
</dbReference>
<dbReference type="InterPro" id="IPR036871">
    <property type="entry name" value="PX_dom_sf"/>
</dbReference>
<dbReference type="InterPro" id="IPR042132">
    <property type="entry name" value="PX_S6K-delta-1"/>
</dbReference>
<dbReference type="InterPro" id="IPR035053">
    <property type="entry name" value="STK_RPK118-like"/>
</dbReference>
<dbReference type="PANTHER" id="PTHR15508">
    <property type="entry name" value="RIBOSOMAL PROTEIN S6 KINASE"/>
    <property type="match status" value="1"/>
</dbReference>
<dbReference type="PANTHER" id="PTHR15508:SF2">
    <property type="entry name" value="RIBOSOMAL PROTEIN S6 KINASE DELTA-1"/>
    <property type="match status" value="1"/>
</dbReference>
<dbReference type="Pfam" id="PF04212">
    <property type="entry name" value="MIT"/>
    <property type="match status" value="1"/>
</dbReference>
<dbReference type="Pfam" id="PF00069">
    <property type="entry name" value="Pkinase"/>
    <property type="match status" value="1"/>
</dbReference>
<dbReference type="Pfam" id="PF00787">
    <property type="entry name" value="PX"/>
    <property type="match status" value="1"/>
</dbReference>
<dbReference type="SMART" id="SM00745">
    <property type="entry name" value="MIT"/>
    <property type="match status" value="1"/>
</dbReference>
<dbReference type="SMART" id="SM00312">
    <property type="entry name" value="PX"/>
    <property type="match status" value="1"/>
</dbReference>
<dbReference type="SMART" id="SM00220">
    <property type="entry name" value="S_TKc"/>
    <property type="match status" value="1"/>
</dbReference>
<dbReference type="SUPFAM" id="SSF116846">
    <property type="entry name" value="MIT domain"/>
    <property type="match status" value="1"/>
</dbReference>
<dbReference type="SUPFAM" id="SSF56112">
    <property type="entry name" value="Protein kinase-like (PK-like)"/>
    <property type="match status" value="1"/>
</dbReference>
<dbReference type="SUPFAM" id="SSF64268">
    <property type="entry name" value="PX domain"/>
    <property type="match status" value="1"/>
</dbReference>
<dbReference type="PROSITE" id="PS50011">
    <property type="entry name" value="PROTEIN_KINASE_DOM"/>
    <property type="match status" value="1"/>
</dbReference>
<dbReference type="PROSITE" id="PS50195">
    <property type="entry name" value="PX"/>
    <property type="match status" value="1"/>
</dbReference>
<sequence>MTSPWGHSADLARFYTVTEPQRHPRGYTVYKVTARVVSRRNPEDVQEIIVWRRYSDFKKLHRELWQIHRNAFRHSELFPPFAKGTVFGRFDKTVIEERRQCAEDLLQFSANIPALYNSRQLQDFFKGGVISDGSELIGPAEAYPDSPANAFPECGTEGFSSDSDLLSLTVDADSLAEVDDGMASRQGSPSRTFGLSLSTDSSAVGAVASDSEPSRVEDRESRSLFPSSLKPRLGRRDYLEKAGELIKLALKKEEEDDYEAASDFYRKGVDLLLEGVQGESSPTRREAVKRRTAEYLMRAESICSLRAAPQLHTGPQPPGSLSSRPPWSLRSPAEELKAFRVLGVIDKVLLVMDTRTEQTFILKGLRKSSECSRNRKTIIPRCVPNMVCLHTYIISEESVFLVLQRAEGGKLWSYISKFLNRSSQESLDIKEGRPSMPPRVCLQQPSASPQGGSSFESRGSDTGSMLKALPLKTSLTPSSQDDSNQEDDGQPSSPKWLDSGSSSEDECTAGYLTLCNEYGQEKMDLVSLSEESVMQPEGDKADTQAVSSPASLATGSVSPSTHLRVFSGGEDLEAVSSPPTSESLSRSKNSPMEFFRIDSKDSTSELLGLDFGEKLHSLKPEPLKALFTLEDGDSPSQSLDPGESKRESEAQDSVSRGSDDSVPVISFKEAAAEAISGAEEGRPDLLVNLPGELQPTKEASAMDPKFSQASAGRLDSKLLEAPDVLCLRLSSEQCHGLGPEGPEELSDPTEFCPGGVIPEHDAQADPGVLFEAAVDHRSSPDQFLFSSLRSESDRLGQVEVVVTAQALQESLFHISSPCSGANKEHSAYADTATSEEVLLFTEPTKEEANSLFQRGSEAQERGVGAGEADKEIHQIFEDLDKRLAASSRFFIPEGCIQRWAAEMVVALDALHREGIVCRDLNPNNILLNDGGHIQLTYFSRWSEVEDSCDSDAVARMYCAPEVGAVTEETEACDWWSLGAVLFELLTGKTLVECHPAGINTHTTLNMPGCVSEEARSLIQQLLQFNPMERLGAGVAGVEDIKSHPFFTPVDWAELTR</sequence>
<protein>
    <recommendedName>
        <fullName>Ribosomal protein S6 kinase delta-1</fullName>
        <shortName>S6K-delta-1</shortName>
        <ecNumber>2.7.11.1</ecNumber>
    </recommendedName>
    <alternativeName>
        <fullName>52 kDa ribosomal protein S6 kinase</fullName>
    </alternativeName>
</protein>
<feature type="chain" id="PRO_0000233128" description="Ribosomal protein S6 kinase delta-1">
    <location>
        <begin position="1"/>
        <end position="1056"/>
    </location>
</feature>
<feature type="domain" description="PX" evidence="2">
    <location>
        <begin position="8"/>
        <end position="132"/>
    </location>
</feature>
<feature type="domain" description="MIT">
    <location>
        <begin position="276"/>
        <end position="304"/>
    </location>
</feature>
<feature type="domain" description="Protein kinase 1" evidence="3">
    <location>
        <begin position="343"/>
        <end position="444"/>
    </location>
</feature>
<feature type="domain" description="Protein kinase 2" evidence="3">
    <location>
        <begin position="789"/>
        <end position="1046"/>
    </location>
</feature>
<feature type="region of interest" description="Disordered" evidence="4">
    <location>
        <begin position="204"/>
        <end position="223"/>
    </location>
</feature>
<feature type="region of interest" description="Disordered" evidence="4">
    <location>
        <begin position="426"/>
        <end position="504"/>
    </location>
</feature>
<feature type="region of interest" description="Disordered" evidence="4">
    <location>
        <begin position="529"/>
        <end position="588"/>
    </location>
</feature>
<feature type="region of interest" description="Disordered" evidence="4">
    <location>
        <begin position="628"/>
        <end position="662"/>
    </location>
</feature>
<feature type="compositionally biased region" description="Basic and acidic residues" evidence="4">
    <location>
        <begin position="212"/>
        <end position="222"/>
    </location>
</feature>
<feature type="compositionally biased region" description="Low complexity" evidence="4">
    <location>
        <begin position="443"/>
        <end position="454"/>
    </location>
</feature>
<feature type="compositionally biased region" description="Polar residues" evidence="4">
    <location>
        <begin position="473"/>
        <end position="482"/>
    </location>
</feature>
<feature type="compositionally biased region" description="Polar residues" evidence="4">
    <location>
        <begin position="544"/>
        <end position="561"/>
    </location>
</feature>
<feature type="compositionally biased region" description="Low complexity" evidence="4">
    <location>
        <begin position="576"/>
        <end position="587"/>
    </location>
</feature>
<feature type="active site" description="Proton acceptor" evidence="3">
    <location>
        <position position="919"/>
    </location>
</feature>
<feature type="binding site" evidence="3">
    <location>
        <begin position="795"/>
        <end position="803"/>
    </location>
    <ligand>
        <name>ATP</name>
        <dbReference type="ChEBI" id="CHEBI:30616"/>
    </ligand>
</feature>
<feature type="binding site" evidence="3">
    <location>
        <position position="823"/>
    </location>
    <ligand>
        <name>ATP</name>
        <dbReference type="ChEBI" id="CHEBI:30616"/>
    </ligand>
</feature>
<feature type="modified residue" description="Phosphoserine" evidence="1">
    <location>
        <position position="281"/>
    </location>
</feature>
<feature type="modified residue" description="Phosphoserine" evidence="1">
    <location>
        <position position="422"/>
    </location>
</feature>
<feature type="modified residue" description="Phosphoserine" evidence="7 8">
    <location>
        <position position="423"/>
    </location>
</feature>
<feature type="modified residue" description="Phosphoserine" evidence="7 8">
    <location>
        <position position="426"/>
    </location>
</feature>
<feature type="modified residue" description="Phosphoserine" evidence="8">
    <location>
        <position position="446"/>
    </location>
</feature>
<feature type="modified residue" description="Phosphoserine" evidence="8">
    <location>
        <position position="448"/>
    </location>
</feature>
<feature type="modified residue" description="Phosphoserine" evidence="1">
    <location>
        <position position="454"/>
    </location>
</feature>
<feature type="modified residue" description="Phosphoserine" evidence="8">
    <location>
        <position position="493"/>
    </location>
</feature>
<feature type="modified residue" description="Phosphoserine" evidence="1">
    <location>
        <position position="527"/>
    </location>
</feature>
<feature type="modified residue" description="Phosphoserine" evidence="1">
    <location>
        <position position="577"/>
    </location>
</feature>
<feature type="modified residue" description="Phosphoserine" evidence="7 8">
    <location>
        <position position="599"/>
    </location>
</feature>
<feature type="modified residue" description="Phosphoserine" evidence="8">
    <location>
        <position position="602"/>
    </location>
</feature>
<feature type="modified residue" description="Phosphoserine" evidence="8">
    <location>
        <position position="634"/>
    </location>
</feature>
<feature type="modified residue" description="Phosphoserine" evidence="1">
    <location>
        <position position="655"/>
    </location>
</feature>
<feature type="modified residue" description="Phosphoserine" evidence="1">
    <location>
        <position position="658"/>
    </location>
</feature>
<feature type="modified residue" description="Phosphoserine" evidence="8">
    <location>
        <position position="661"/>
    </location>
</feature>
<feature type="modified residue" description="Phosphoserine" evidence="8">
    <location>
        <position position="787"/>
    </location>
</feature>
<feature type="splice variant" id="VSP_018043" description="In isoform 2." evidence="5">
    <location>
        <begin position="36"/>
        <end position="47"/>
    </location>
</feature>
<feature type="splice variant" id="VSP_018044" description="In isoform 2." evidence="5">
    <location>
        <begin position="89"/>
        <end position="158"/>
    </location>
</feature>
<feature type="splice variant" id="VSP_018045" description="In isoform 4." evidence="5">
    <original>ESSPTRREAVKRRTAEYLMRAESICSLRAAPQLHTGPQPPGSLSSRPPWSLRSPAEEL</original>
    <variation>KVRQCHHWLESLGSLQKSERNLEKPSHTRAQQDIASPLVTKITKSHHLIICRSVHSSK</variation>
    <location>
        <begin position="279"/>
        <end position="336"/>
    </location>
</feature>
<feature type="splice variant" id="VSP_018046" description="In isoform 3." evidence="5">
    <location>
        <begin position="317"/>
        <end position="347"/>
    </location>
</feature>
<feature type="splice variant" id="VSP_018047" description="In isoform 4." evidence="5">
    <location>
        <begin position="337"/>
        <end position="1056"/>
    </location>
</feature>
<feature type="splice variant" id="VSP_018048" description="In isoform 3." evidence="5">
    <original>HIQLTYFSRWSEVEDS</original>
    <variation>QELSQMHFFLFAVASN</variation>
    <location>
        <begin position="932"/>
        <end position="947"/>
    </location>
</feature>
<feature type="splice variant" id="VSP_018049" description="In isoform 3." evidence="5">
    <location>
        <begin position="948"/>
        <end position="1056"/>
    </location>
</feature>
<feature type="splice variant" id="VSP_018050" description="In isoform 2." evidence="5">
    <original>E</original>
    <variation>G</variation>
    <location>
        <position position="961"/>
    </location>
</feature>
<feature type="splice variant" id="VSP_018051" description="In isoform 2." evidence="5">
    <location>
        <begin position="962"/>
        <end position="1056"/>
    </location>
</feature>
<feature type="sequence conflict" description="In Ref. 2; AAH58403." evidence="6" ref="2">
    <original>GSE</original>
    <variation>DSD</variation>
    <location>
        <begin position="855"/>
        <end position="857"/>
    </location>
</feature>
<feature type="sequence conflict" description="In Ref. 1; BAC33510." evidence="6" ref="1">
    <original>G</original>
    <variation>D</variation>
    <location>
        <position position="855"/>
    </location>
</feature>
<proteinExistence type="evidence at protein level"/>